<name>GREA_RHOPT</name>
<proteinExistence type="inferred from homology"/>
<comment type="function">
    <text evidence="1">Necessary for efficient RNA polymerase transcription elongation past template-encoded arresting sites. The arresting sites in DNA have the property of trapping a certain fraction of elongating RNA polymerases that pass through, resulting in locked ternary complexes. Cleavage of the nascent transcript by cleavage factors such as GreA or GreB allows the resumption of elongation from the new 3'terminus. GreA releases sequences of 2 to 3 nucleotides.</text>
</comment>
<comment type="similarity">
    <text evidence="1">Belongs to the GreA/GreB family.</text>
</comment>
<evidence type="ECO:0000255" key="1">
    <source>
        <dbReference type="HAMAP-Rule" id="MF_00105"/>
    </source>
</evidence>
<sequence>MVEKIPMTASGYAALSDELKHRQSVDRPRIIEHIAEARSHGDLSENAEYHAAKEEQSHNEGRINELEDKLARADIIDVSKLSGDTVKFGATVTLIDEDTEKKAVWQIVGEAEADAKKGKISITSPLARALIGKKAGSSVEVVAPGGAKAYEIAKVEWR</sequence>
<protein>
    <recommendedName>
        <fullName evidence="1">Transcription elongation factor GreA</fullName>
    </recommendedName>
    <alternativeName>
        <fullName evidence="1">Transcript cleavage factor GreA</fullName>
    </alternativeName>
</protein>
<gene>
    <name evidence="1" type="primary">greA</name>
    <name type="ordered locus">Rpal_4606</name>
</gene>
<accession>B3QJZ1</accession>
<keyword id="KW-0175">Coiled coil</keyword>
<keyword id="KW-0238">DNA-binding</keyword>
<keyword id="KW-0804">Transcription</keyword>
<keyword id="KW-0805">Transcription regulation</keyword>
<dbReference type="EMBL" id="CP001096">
    <property type="protein sequence ID" value="ACF03097.1"/>
    <property type="molecule type" value="Genomic_DNA"/>
</dbReference>
<dbReference type="RefSeq" id="WP_011159607.1">
    <property type="nucleotide sequence ID" value="NC_011004.1"/>
</dbReference>
<dbReference type="SMR" id="B3QJZ1"/>
<dbReference type="GeneID" id="66895191"/>
<dbReference type="KEGG" id="rpt:Rpal_4606"/>
<dbReference type="HOGENOM" id="CLU_101379_2_0_5"/>
<dbReference type="OrthoDB" id="9808774at2"/>
<dbReference type="Proteomes" id="UP000001725">
    <property type="component" value="Chromosome"/>
</dbReference>
<dbReference type="GO" id="GO:0003677">
    <property type="term" value="F:DNA binding"/>
    <property type="evidence" value="ECO:0007669"/>
    <property type="project" value="UniProtKB-UniRule"/>
</dbReference>
<dbReference type="GO" id="GO:0070063">
    <property type="term" value="F:RNA polymerase binding"/>
    <property type="evidence" value="ECO:0007669"/>
    <property type="project" value="InterPro"/>
</dbReference>
<dbReference type="GO" id="GO:0006354">
    <property type="term" value="P:DNA-templated transcription elongation"/>
    <property type="evidence" value="ECO:0007669"/>
    <property type="project" value="TreeGrafter"/>
</dbReference>
<dbReference type="GO" id="GO:0032784">
    <property type="term" value="P:regulation of DNA-templated transcription elongation"/>
    <property type="evidence" value="ECO:0007669"/>
    <property type="project" value="UniProtKB-UniRule"/>
</dbReference>
<dbReference type="FunFam" id="1.10.287.180:FF:000001">
    <property type="entry name" value="Transcription elongation factor GreA"/>
    <property type="match status" value="1"/>
</dbReference>
<dbReference type="FunFam" id="3.10.50.30:FF:000001">
    <property type="entry name" value="Transcription elongation factor GreA"/>
    <property type="match status" value="1"/>
</dbReference>
<dbReference type="Gene3D" id="3.10.50.30">
    <property type="entry name" value="Transcription elongation factor, GreA/GreB, C-terminal domain"/>
    <property type="match status" value="1"/>
</dbReference>
<dbReference type="Gene3D" id="1.10.287.180">
    <property type="entry name" value="Transcription elongation factor, GreA/GreB, N-terminal domain"/>
    <property type="match status" value="1"/>
</dbReference>
<dbReference type="HAMAP" id="MF_00105">
    <property type="entry name" value="GreA_GreB"/>
    <property type="match status" value="1"/>
</dbReference>
<dbReference type="InterPro" id="IPR036953">
    <property type="entry name" value="GreA/GreB_C_sf"/>
</dbReference>
<dbReference type="InterPro" id="IPR018151">
    <property type="entry name" value="TF_GreA/GreB_CS"/>
</dbReference>
<dbReference type="InterPro" id="IPR006359">
    <property type="entry name" value="Tscrpt_elong_fac_GreA"/>
</dbReference>
<dbReference type="InterPro" id="IPR028624">
    <property type="entry name" value="Tscrpt_elong_fac_GreA/B"/>
</dbReference>
<dbReference type="InterPro" id="IPR001437">
    <property type="entry name" value="Tscrpt_elong_fac_GreA/B_C"/>
</dbReference>
<dbReference type="InterPro" id="IPR023459">
    <property type="entry name" value="Tscrpt_elong_fac_GreA/B_fam"/>
</dbReference>
<dbReference type="InterPro" id="IPR022691">
    <property type="entry name" value="Tscrpt_elong_fac_GreA/B_N"/>
</dbReference>
<dbReference type="InterPro" id="IPR036805">
    <property type="entry name" value="Tscrpt_elong_fac_GreA/B_N_sf"/>
</dbReference>
<dbReference type="NCBIfam" id="TIGR01462">
    <property type="entry name" value="greA"/>
    <property type="match status" value="1"/>
</dbReference>
<dbReference type="NCBIfam" id="NF001261">
    <property type="entry name" value="PRK00226.1-2"/>
    <property type="match status" value="1"/>
</dbReference>
<dbReference type="NCBIfam" id="NF001263">
    <property type="entry name" value="PRK00226.1-4"/>
    <property type="match status" value="1"/>
</dbReference>
<dbReference type="NCBIfam" id="NF001264">
    <property type="entry name" value="PRK00226.1-5"/>
    <property type="match status" value="1"/>
</dbReference>
<dbReference type="PANTHER" id="PTHR30437">
    <property type="entry name" value="TRANSCRIPTION ELONGATION FACTOR GREA"/>
    <property type="match status" value="1"/>
</dbReference>
<dbReference type="PANTHER" id="PTHR30437:SF4">
    <property type="entry name" value="TRANSCRIPTION ELONGATION FACTOR GREA"/>
    <property type="match status" value="1"/>
</dbReference>
<dbReference type="Pfam" id="PF01272">
    <property type="entry name" value="GreA_GreB"/>
    <property type="match status" value="1"/>
</dbReference>
<dbReference type="Pfam" id="PF03449">
    <property type="entry name" value="GreA_GreB_N"/>
    <property type="match status" value="1"/>
</dbReference>
<dbReference type="PIRSF" id="PIRSF006092">
    <property type="entry name" value="GreA_GreB"/>
    <property type="match status" value="1"/>
</dbReference>
<dbReference type="SUPFAM" id="SSF54534">
    <property type="entry name" value="FKBP-like"/>
    <property type="match status" value="1"/>
</dbReference>
<dbReference type="SUPFAM" id="SSF46557">
    <property type="entry name" value="GreA transcript cleavage protein, N-terminal domain"/>
    <property type="match status" value="1"/>
</dbReference>
<dbReference type="PROSITE" id="PS00829">
    <property type="entry name" value="GREAB_1"/>
    <property type="match status" value="1"/>
</dbReference>
<organism>
    <name type="scientific">Rhodopseudomonas palustris (strain TIE-1)</name>
    <dbReference type="NCBI Taxonomy" id="395960"/>
    <lineage>
        <taxon>Bacteria</taxon>
        <taxon>Pseudomonadati</taxon>
        <taxon>Pseudomonadota</taxon>
        <taxon>Alphaproteobacteria</taxon>
        <taxon>Hyphomicrobiales</taxon>
        <taxon>Nitrobacteraceae</taxon>
        <taxon>Rhodopseudomonas</taxon>
    </lineage>
</organism>
<feature type="chain" id="PRO_1000094193" description="Transcription elongation factor GreA">
    <location>
        <begin position="1"/>
        <end position="158"/>
    </location>
</feature>
<feature type="coiled-coil region" evidence="1">
    <location>
        <begin position="47"/>
        <end position="74"/>
    </location>
</feature>
<reference key="1">
    <citation type="submission" date="2008-05" db="EMBL/GenBank/DDBJ databases">
        <title>Complete sequence of Rhodopseudomonas palustris TIE-1.</title>
        <authorList>
            <consortium name="US DOE Joint Genome Institute"/>
            <person name="Lucas S."/>
            <person name="Copeland A."/>
            <person name="Lapidus A."/>
            <person name="Glavina del Rio T."/>
            <person name="Dalin E."/>
            <person name="Tice H."/>
            <person name="Pitluck S."/>
            <person name="Chain P."/>
            <person name="Malfatti S."/>
            <person name="Shin M."/>
            <person name="Vergez L."/>
            <person name="Lang D."/>
            <person name="Schmutz J."/>
            <person name="Larimer F."/>
            <person name="Land M."/>
            <person name="Hauser L."/>
            <person name="Kyrpides N."/>
            <person name="Mikhailova N."/>
            <person name="Emerson D."/>
            <person name="Newman D.K."/>
            <person name="Roden E."/>
            <person name="Richardson P."/>
        </authorList>
    </citation>
    <scope>NUCLEOTIDE SEQUENCE [LARGE SCALE GENOMIC DNA]</scope>
    <source>
        <strain>TIE-1</strain>
    </source>
</reference>